<feature type="chain" id="PRO_0000282026" description="23S rRNA (uracil(1939)-C(5))-methyltransferase RlmD">
    <location>
        <begin position="1"/>
        <end position="440"/>
    </location>
</feature>
<feature type="domain" description="TRAM" evidence="1">
    <location>
        <begin position="10"/>
        <end position="68"/>
    </location>
</feature>
<feature type="active site" description="Nucleophile" evidence="1">
    <location>
        <position position="397"/>
    </location>
</feature>
<feature type="binding site" evidence="1">
    <location>
        <position position="81"/>
    </location>
    <ligand>
        <name>[4Fe-4S] cluster</name>
        <dbReference type="ChEBI" id="CHEBI:49883"/>
    </ligand>
</feature>
<feature type="binding site" evidence="1">
    <location>
        <position position="87"/>
    </location>
    <ligand>
        <name>[4Fe-4S] cluster</name>
        <dbReference type="ChEBI" id="CHEBI:49883"/>
    </ligand>
</feature>
<feature type="binding site" evidence="1">
    <location>
        <position position="90"/>
    </location>
    <ligand>
        <name>[4Fe-4S] cluster</name>
        <dbReference type="ChEBI" id="CHEBI:49883"/>
    </ligand>
</feature>
<feature type="binding site" evidence="1">
    <location>
        <position position="169"/>
    </location>
    <ligand>
        <name>[4Fe-4S] cluster</name>
        <dbReference type="ChEBI" id="CHEBI:49883"/>
    </ligand>
</feature>
<feature type="binding site" evidence="1">
    <location>
        <position position="273"/>
    </location>
    <ligand>
        <name>S-adenosyl-L-methionine</name>
        <dbReference type="ChEBI" id="CHEBI:59789"/>
    </ligand>
</feature>
<feature type="binding site" evidence="1">
    <location>
        <position position="302"/>
    </location>
    <ligand>
        <name>S-adenosyl-L-methionine</name>
        <dbReference type="ChEBI" id="CHEBI:59789"/>
    </ligand>
</feature>
<feature type="binding site" evidence="1">
    <location>
        <position position="307"/>
    </location>
    <ligand>
        <name>S-adenosyl-L-methionine</name>
        <dbReference type="ChEBI" id="CHEBI:59789"/>
    </ligand>
</feature>
<feature type="binding site" evidence="1">
    <location>
        <position position="323"/>
    </location>
    <ligand>
        <name>S-adenosyl-L-methionine</name>
        <dbReference type="ChEBI" id="CHEBI:59789"/>
    </ligand>
</feature>
<feature type="binding site" evidence="1">
    <location>
        <position position="350"/>
    </location>
    <ligand>
        <name>S-adenosyl-L-methionine</name>
        <dbReference type="ChEBI" id="CHEBI:59789"/>
    </ligand>
</feature>
<feature type="binding site" evidence="1">
    <location>
        <position position="371"/>
    </location>
    <ligand>
        <name>S-adenosyl-L-methionine</name>
        <dbReference type="ChEBI" id="CHEBI:59789"/>
    </ligand>
</feature>
<reference key="1">
    <citation type="journal article" date="2006" name="J. Bacteriol.">
        <title>Genome sequence of Aeromonas hydrophila ATCC 7966T: jack of all trades.</title>
        <authorList>
            <person name="Seshadri R."/>
            <person name="Joseph S.W."/>
            <person name="Chopra A.K."/>
            <person name="Sha J."/>
            <person name="Shaw J."/>
            <person name="Graf J."/>
            <person name="Haft D.H."/>
            <person name="Wu M."/>
            <person name="Ren Q."/>
            <person name="Rosovitz M.J."/>
            <person name="Madupu R."/>
            <person name="Tallon L."/>
            <person name="Kim M."/>
            <person name="Jin S."/>
            <person name="Vuong H."/>
            <person name="Stine O.C."/>
            <person name="Ali A."/>
            <person name="Horneman A.J."/>
            <person name="Heidelberg J.F."/>
        </authorList>
    </citation>
    <scope>NUCLEOTIDE SEQUENCE [LARGE SCALE GENOMIC DNA]</scope>
    <source>
        <strain>ATCC 7966 / DSM 30187 / BCRC 13018 / CCUG 14551 / JCM 1027 / KCTC 2358 / NCIMB 9240 / NCTC 8049</strain>
    </source>
</reference>
<dbReference type="EC" id="2.1.1.190" evidence="1"/>
<dbReference type="EMBL" id="CP000462">
    <property type="protein sequence ID" value="ABK37173.1"/>
    <property type="molecule type" value="Genomic_DNA"/>
</dbReference>
<dbReference type="RefSeq" id="WP_011704765.1">
    <property type="nucleotide sequence ID" value="NC_008570.1"/>
</dbReference>
<dbReference type="RefSeq" id="YP_855360.1">
    <property type="nucleotide sequence ID" value="NC_008570.1"/>
</dbReference>
<dbReference type="SMR" id="A0KGG9"/>
<dbReference type="STRING" id="380703.AHA_0817"/>
<dbReference type="EnsemblBacteria" id="ABK37173">
    <property type="protein sequence ID" value="ABK37173"/>
    <property type="gene ID" value="AHA_0817"/>
</dbReference>
<dbReference type="GeneID" id="4489297"/>
<dbReference type="KEGG" id="aha:AHA_0817"/>
<dbReference type="PATRIC" id="fig|380703.7.peg.816"/>
<dbReference type="eggNOG" id="COG2265">
    <property type="taxonomic scope" value="Bacteria"/>
</dbReference>
<dbReference type="HOGENOM" id="CLU_014689_8_2_6"/>
<dbReference type="OrthoDB" id="9804590at2"/>
<dbReference type="Proteomes" id="UP000000756">
    <property type="component" value="Chromosome"/>
</dbReference>
<dbReference type="GO" id="GO:0051539">
    <property type="term" value="F:4 iron, 4 sulfur cluster binding"/>
    <property type="evidence" value="ECO:0007669"/>
    <property type="project" value="UniProtKB-KW"/>
</dbReference>
<dbReference type="GO" id="GO:0005506">
    <property type="term" value="F:iron ion binding"/>
    <property type="evidence" value="ECO:0007669"/>
    <property type="project" value="UniProtKB-UniRule"/>
</dbReference>
<dbReference type="GO" id="GO:0003723">
    <property type="term" value="F:RNA binding"/>
    <property type="evidence" value="ECO:0007669"/>
    <property type="project" value="InterPro"/>
</dbReference>
<dbReference type="GO" id="GO:0070041">
    <property type="term" value="F:rRNA (uridine-C5-)-methyltransferase activity"/>
    <property type="evidence" value="ECO:0007669"/>
    <property type="project" value="UniProtKB-UniRule"/>
</dbReference>
<dbReference type="GO" id="GO:0070475">
    <property type="term" value="P:rRNA base methylation"/>
    <property type="evidence" value="ECO:0007669"/>
    <property type="project" value="TreeGrafter"/>
</dbReference>
<dbReference type="CDD" id="cd02440">
    <property type="entry name" value="AdoMet_MTases"/>
    <property type="match status" value="1"/>
</dbReference>
<dbReference type="FunFam" id="3.40.50.150:FF:000009">
    <property type="entry name" value="23S rRNA (Uracil(1939)-C(5))-methyltransferase RlmD"/>
    <property type="match status" value="1"/>
</dbReference>
<dbReference type="FunFam" id="2.40.50.140:FF:000097">
    <property type="entry name" value="23S rRNA (uracil(1939)-C(5))-methyltransferase RlmD"/>
    <property type="match status" value="1"/>
</dbReference>
<dbReference type="Gene3D" id="2.40.50.1070">
    <property type="match status" value="1"/>
</dbReference>
<dbReference type="Gene3D" id="2.40.50.140">
    <property type="entry name" value="Nucleic acid-binding proteins"/>
    <property type="match status" value="1"/>
</dbReference>
<dbReference type="Gene3D" id="3.40.50.150">
    <property type="entry name" value="Vaccinia Virus protein VP39"/>
    <property type="match status" value="1"/>
</dbReference>
<dbReference type="HAMAP" id="MF_01010">
    <property type="entry name" value="23SrRNA_methyltr_RlmD"/>
    <property type="match status" value="1"/>
</dbReference>
<dbReference type="InterPro" id="IPR001566">
    <property type="entry name" value="23S_rRNA_MeTrfase_RlmD"/>
</dbReference>
<dbReference type="InterPro" id="IPR030390">
    <property type="entry name" value="MeTrfase_TrmA_AS"/>
</dbReference>
<dbReference type="InterPro" id="IPR030391">
    <property type="entry name" value="MeTrfase_TrmA_CS"/>
</dbReference>
<dbReference type="InterPro" id="IPR012340">
    <property type="entry name" value="NA-bd_OB-fold"/>
</dbReference>
<dbReference type="InterPro" id="IPR029063">
    <property type="entry name" value="SAM-dependent_MTases_sf"/>
</dbReference>
<dbReference type="InterPro" id="IPR002792">
    <property type="entry name" value="TRAM_dom"/>
</dbReference>
<dbReference type="InterPro" id="IPR010280">
    <property type="entry name" value="U5_MeTrfase_fam"/>
</dbReference>
<dbReference type="NCBIfam" id="NF009639">
    <property type="entry name" value="PRK13168.1"/>
    <property type="match status" value="1"/>
</dbReference>
<dbReference type="NCBIfam" id="TIGR00479">
    <property type="entry name" value="rumA"/>
    <property type="match status" value="1"/>
</dbReference>
<dbReference type="PANTHER" id="PTHR11061:SF49">
    <property type="entry name" value="23S RRNA (URACIL(1939)-C(5))-METHYLTRANSFERASE RLMD"/>
    <property type="match status" value="1"/>
</dbReference>
<dbReference type="PANTHER" id="PTHR11061">
    <property type="entry name" value="RNA M5U METHYLTRANSFERASE"/>
    <property type="match status" value="1"/>
</dbReference>
<dbReference type="Pfam" id="PF01938">
    <property type="entry name" value="TRAM"/>
    <property type="match status" value="1"/>
</dbReference>
<dbReference type="Pfam" id="PF05958">
    <property type="entry name" value="tRNA_U5-meth_tr"/>
    <property type="match status" value="1"/>
</dbReference>
<dbReference type="SUPFAM" id="SSF50249">
    <property type="entry name" value="Nucleic acid-binding proteins"/>
    <property type="match status" value="1"/>
</dbReference>
<dbReference type="SUPFAM" id="SSF53335">
    <property type="entry name" value="S-adenosyl-L-methionine-dependent methyltransferases"/>
    <property type="match status" value="1"/>
</dbReference>
<dbReference type="PROSITE" id="PS51687">
    <property type="entry name" value="SAM_MT_RNA_M5U"/>
    <property type="match status" value="1"/>
</dbReference>
<dbReference type="PROSITE" id="PS50926">
    <property type="entry name" value="TRAM"/>
    <property type="match status" value="1"/>
</dbReference>
<dbReference type="PROSITE" id="PS01230">
    <property type="entry name" value="TRMA_1"/>
    <property type="match status" value="1"/>
</dbReference>
<dbReference type="PROSITE" id="PS01231">
    <property type="entry name" value="TRMA_2"/>
    <property type="match status" value="1"/>
</dbReference>
<accession>A0KGG9</accession>
<keyword id="KW-0004">4Fe-4S</keyword>
<keyword id="KW-0408">Iron</keyword>
<keyword id="KW-0411">Iron-sulfur</keyword>
<keyword id="KW-0479">Metal-binding</keyword>
<keyword id="KW-0489">Methyltransferase</keyword>
<keyword id="KW-1185">Reference proteome</keyword>
<keyword id="KW-0698">rRNA processing</keyword>
<keyword id="KW-0949">S-adenosyl-L-methionine</keyword>
<keyword id="KW-0808">Transferase</keyword>
<evidence type="ECO:0000255" key="1">
    <source>
        <dbReference type="HAMAP-Rule" id="MF_01010"/>
    </source>
</evidence>
<name>RLMD_AERHH</name>
<organism>
    <name type="scientific">Aeromonas hydrophila subsp. hydrophila (strain ATCC 7966 / DSM 30187 / BCRC 13018 / CCUG 14551 / JCM 1027 / KCTC 2358 / NCIMB 9240 / NCTC 8049)</name>
    <dbReference type="NCBI Taxonomy" id="380703"/>
    <lineage>
        <taxon>Bacteria</taxon>
        <taxon>Pseudomonadati</taxon>
        <taxon>Pseudomonadota</taxon>
        <taxon>Gammaproteobacteria</taxon>
        <taxon>Aeromonadales</taxon>
        <taxon>Aeromonadaceae</taxon>
        <taxon>Aeromonas</taxon>
    </lineage>
</organism>
<protein>
    <recommendedName>
        <fullName evidence="1">23S rRNA (uracil(1939)-C(5))-methyltransferase RlmD</fullName>
        <ecNumber evidence="1">2.1.1.190</ecNumber>
    </recommendedName>
    <alternativeName>
        <fullName evidence="1">23S rRNA(m5U1939)-methyltransferase</fullName>
    </alternativeName>
</protein>
<sequence length="440" mass="48804">MAQFFKPQKKSTQPQRIEFTVDSLDHHCVGIGRHQGKAIFIEGALPGELVKARILEDKKQYAHAALQQVVTPAANRIAPFCSHYRECGGCSAQHLAEADQRAAKEAGLVSLFERLGNIQPPALEPVLGGESRAYRRVCRLAIKFDKNGRCTRVGFRRRQSNDLVEIGGCPVLAEPLSVLITPLRECLNRLKSQRELGHVELIQAEQGILMLLRHTGRPTEADRAQLIEFAKTQGIDLYLQAADEQIEPLHQQFAPSYSLDGLSLAFAPGDFIQVNAPVNQRMVEQALSWLEAGKDDKVLDLFCGIGNFTLPLARQAREVVGVEGELAMVARAEENARRNGINNARFYKADLGGDIAGMSWAREGFDLVLLDPARPGAFEVMEHVVKLSPRRVVYVSCNPVTLARDSQVLVKGGYRLVRLGMLDMFPHTGHLESMALFERK</sequence>
<comment type="function">
    <text evidence="1">Catalyzes the formation of 5-methyl-uridine at position 1939 (m5U1939) in 23S rRNA.</text>
</comment>
<comment type="catalytic activity">
    <reaction evidence="1">
        <text>uridine(1939) in 23S rRNA + S-adenosyl-L-methionine = 5-methyluridine(1939) in 23S rRNA + S-adenosyl-L-homocysteine + H(+)</text>
        <dbReference type="Rhea" id="RHEA:42908"/>
        <dbReference type="Rhea" id="RHEA-COMP:10278"/>
        <dbReference type="Rhea" id="RHEA-COMP:10279"/>
        <dbReference type="ChEBI" id="CHEBI:15378"/>
        <dbReference type="ChEBI" id="CHEBI:57856"/>
        <dbReference type="ChEBI" id="CHEBI:59789"/>
        <dbReference type="ChEBI" id="CHEBI:65315"/>
        <dbReference type="ChEBI" id="CHEBI:74447"/>
        <dbReference type="EC" id="2.1.1.190"/>
    </reaction>
</comment>
<comment type="similarity">
    <text evidence="1">Belongs to the class I-like SAM-binding methyltransferase superfamily. RNA M5U methyltransferase family. RlmD subfamily.</text>
</comment>
<proteinExistence type="inferred from homology"/>
<gene>
    <name evidence="1" type="primary">rlmD</name>
    <name type="synonym">rumA</name>
    <name type="ordered locus">AHA_0817</name>
</gene>